<accession>Q0CI48</accession>
<feature type="signal peptide" evidence="2">
    <location>
        <begin position="1"/>
        <end position="19"/>
    </location>
</feature>
<feature type="chain" id="PRO_0000394648" description="Beta-mannosidase A">
    <location>
        <begin position="20"/>
        <end position="932"/>
    </location>
</feature>
<feature type="active site" description="Proton donor" evidence="1">
    <location>
        <position position="480"/>
    </location>
</feature>
<feature type="glycosylation site" description="N-linked (GlcNAc...) asparagine" evidence="2">
    <location>
        <position position="41"/>
    </location>
</feature>
<feature type="glycosylation site" description="N-linked (GlcNAc...) asparagine" evidence="2">
    <location>
        <position position="81"/>
    </location>
</feature>
<feature type="glycosylation site" description="N-linked (GlcNAc...) asparagine" evidence="2">
    <location>
        <position position="94"/>
    </location>
</feature>
<feature type="glycosylation site" description="N-linked (GlcNAc...) asparagine" evidence="2">
    <location>
        <position position="249"/>
    </location>
</feature>
<feature type="glycosylation site" description="N-linked (GlcNAc...) asparagine" evidence="2">
    <location>
        <position position="261"/>
    </location>
</feature>
<feature type="glycosylation site" description="N-linked (GlcNAc...) asparagine" evidence="2">
    <location>
        <position position="284"/>
    </location>
</feature>
<feature type="glycosylation site" description="N-linked (GlcNAc...) asparagine" evidence="2">
    <location>
        <position position="289"/>
    </location>
</feature>
<feature type="glycosylation site" description="N-linked (GlcNAc...) asparagine" evidence="2">
    <location>
        <position position="318"/>
    </location>
</feature>
<feature type="glycosylation site" description="N-linked (GlcNAc...) asparagine" evidence="2">
    <location>
        <position position="348"/>
    </location>
</feature>
<feature type="glycosylation site" description="N-linked (GlcNAc...) asparagine" evidence="2">
    <location>
        <position position="538"/>
    </location>
</feature>
<feature type="glycosylation site" description="N-linked (GlcNAc...) asparagine" evidence="2">
    <location>
        <position position="551"/>
    </location>
</feature>
<feature type="glycosylation site" description="N-linked (GlcNAc...) asparagine" evidence="2">
    <location>
        <position position="609"/>
    </location>
</feature>
<feature type="glycosylation site" description="N-linked (GlcNAc...) asparagine" evidence="2">
    <location>
        <position position="624"/>
    </location>
</feature>
<feature type="glycosylation site" description="N-linked (GlcNAc...) asparagine" evidence="2">
    <location>
        <position position="632"/>
    </location>
</feature>
<feature type="glycosylation site" description="N-linked (GlcNAc...) asparagine" evidence="2">
    <location>
        <position position="659"/>
    </location>
</feature>
<feature type="glycosylation site" description="N-linked (GlcNAc...) asparagine" evidence="2">
    <location>
        <position position="739"/>
    </location>
</feature>
<feature type="glycosylation site" description="N-linked (GlcNAc...) asparagine" evidence="2">
    <location>
        <position position="791"/>
    </location>
</feature>
<proteinExistence type="inferred from homology"/>
<organism>
    <name type="scientific">Aspergillus terreus (strain NIH 2624 / FGSC A1156)</name>
    <dbReference type="NCBI Taxonomy" id="341663"/>
    <lineage>
        <taxon>Eukaryota</taxon>
        <taxon>Fungi</taxon>
        <taxon>Dikarya</taxon>
        <taxon>Ascomycota</taxon>
        <taxon>Pezizomycotina</taxon>
        <taxon>Eurotiomycetes</taxon>
        <taxon>Eurotiomycetidae</taxon>
        <taxon>Eurotiales</taxon>
        <taxon>Aspergillaceae</taxon>
        <taxon>Aspergillus</taxon>
        <taxon>Aspergillus subgen. Circumdati</taxon>
    </lineage>
</organism>
<evidence type="ECO:0000250" key="1"/>
<evidence type="ECO:0000255" key="2"/>
<evidence type="ECO:0000305" key="3"/>
<gene>
    <name type="primary">mndA</name>
    <name type="ORF">ATEG_06636</name>
</gene>
<name>MANBA_ASPTN</name>
<dbReference type="EC" id="3.2.1.25"/>
<dbReference type="EMBL" id="CH476602">
    <property type="protein sequence ID" value="EAU33180.1"/>
    <property type="status" value="ALT_SEQ"/>
    <property type="molecule type" value="Genomic_DNA"/>
</dbReference>
<dbReference type="RefSeq" id="XP_001215814.1">
    <property type="nucleotide sequence ID" value="XM_001215814.1"/>
</dbReference>
<dbReference type="SMR" id="Q0CI48"/>
<dbReference type="STRING" id="341663.Q0CI48"/>
<dbReference type="GlyCosmos" id="Q0CI48">
    <property type="glycosylation" value="17 sites, No reported glycans"/>
</dbReference>
<dbReference type="GeneID" id="4321960"/>
<dbReference type="eggNOG" id="KOG2230">
    <property type="taxonomic scope" value="Eukaryota"/>
</dbReference>
<dbReference type="OrthoDB" id="2866996at2759"/>
<dbReference type="UniPathway" id="UPA00280"/>
<dbReference type="Proteomes" id="UP000007963">
    <property type="component" value="Unassembled WGS sequence"/>
</dbReference>
<dbReference type="GO" id="GO:0005576">
    <property type="term" value="C:extracellular region"/>
    <property type="evidence" value="ECO:0007669"/>
    <property type="project" value="UniProtKB-SubCell"/>
</dbReference>
<dbReference type="GO" id="GO:0004567">
    <property type="term" value="F:beta-mannosidase activity"/>
    <property type="evidence" value="ECO:0007669"/>
    <property type="project" value="UniProtKB-EC"/>
</dbReference>
<dbReference type="GO" id="GO:0006516">
    <property type="term" value="P:glycoprotein catabolic process"/>
    <property type="evidence" value="ECO:0007669"/>
    <property type="project" value="TreeGrafter"/>
</dbReference>
<dbReference type="GO" id="GO:0000272">
    <property type="term" value="P:polysaccharide catabolic process"/>
    <property type="evidence" value="ECO:0007669"/>
    <property type="project" value="UniProtKB-KW"/>
</dbReference>
<dbReference type="FunFam" id="2.60.120.260:FF:000200">
    <property type="entry name" value="Beta-mannosidase A"/>
    <property type="match status" value="1"/>
</dbReference>
<dbReference type="FunFam" id="2.60.40.10:FF:001511">
    <property type="entry name" value="Beta-mannosidase A"/>
    <property type="match status" value="1"/>
</dbReference>
<dbReference type="FunFam" id="2.60.40.10:FF:002310">
    <property type="entry name" value="Beta-mannosidase A"/>
    <property type="match status" value="1"/>
</dbReference>
<dbReference type="FunFam" id="3.20.20.80:FF:000084">
    <property type="entry name" value="Beta-mannosidase A"/>
    <property type="match status" value="1"/>
</dbReference>
<dbReference type="Gene3D" id="2.60.120.260">
    <property type="entry name" value="Galactose-binding domain-like"/>
    <property type="match status" value="1"/>
</dbReference>
<dbReference type="Gene3D" id="3.20.20.80">
    <property type="entry name" value="Glycosidases"/>
    <property type="match status" value="1"/>
</dbReference>
<dbReference type="Gene3D" id="2.60.40.10">
    <property type="entry name" value="Immunoglobulins"/>
    <property type="match status" value="3"/>
</dbReference>
<dbReference type="InterPro" id="IPR036156">
    <property type="entry name" value="Beta-gal/glucu_dom_sf"/>
</dbReference>
<dbReference type="InterPro" id="IPR054593">
    <property type="entry name" value="Beta-mannosidase-like_N2"/>
</dbReference>
<dbReference type="InterPro" id="IPR050887">
    <property type="entry name" value="Beta-mannosidase_GH2"/>
</dbReference>
<dbReference type="InterPro" id="IPR041625">
    <property type="entry name" value="Beta-mannosidase_Ig"/>
</dbReference>
<dbReference type="InterPro" id="IPR008979">
    <property type="entry name" value="Galactose-bd-like_sf"/>
</dbReference>
<dbReference type="InterPro" id="IPR006102">
    <property type="entry name" value="Glyco_hydro_2_Ig-like"/>
</dbReference>
<dbReference type="InterPro" id="IPR017853">
    <property type="entry name" value="Glycoside_hydrolase_SF"/>
</dbReference>
<dbReference type="InterPro" id="IPR013783">
    <property type="entry name" value="Ig-like_fold"/>
</dbReference>
<dbReference type="InterPro" id="IPR041447">
    <property type="entry name" value="Mannosidase_ig"/>
</dbReference>
<dbReference type="PANTHER" id="PTHR43730">
    <property type="entry name" value="BETA-MANNOSIDASE"/>
    <property type="match status" value="1"/>
</dbReference>
<dbReference type="PANTHER" id="PTHR43730:SF5">
    <property type="entry name" value="BETA-MANNOSIDASE A"/>
    <property type="match status" value="1"/>
</dbReference>
<dbReference type="Pfam" id="PF00703">
    <property type="entry name" value="Glyco_hydro_2"/>
    <property type="match status" value="1"/>
</dbReference>
<dbReference type="Pfam" id="PF22666">
    <property type="entry name" value="Glyco_hydro_2_N2"/>
    <property type="match status" value="1"/>
</dbReference>
<dbReference type="Pfam" id="PF17753">
    <property type="entry name" value="Ig_mannosidase"/>
    <property type="match status" value="1"/>
</dbReference>
<dbReference type="Pfam" id="PF17786">
    <property type="entry name" value="Mannosidase_ig"/>
    <property type="match status" value="1"/>
</dbReference>
<dbReference type="SUPFAM" id="SSF51445">
    <property type="entry name" value="(Trans)glycosidases"/>
    <property type="match status" value="1"/>
</dbReference>
<dbReference type="SUPFAM" id="SSF49303">
    <property type="entry name" value="beta-Galactosidase/glucuronidase domain"/>
    <property type="match status" value="1"/>
</dbReference>
<dbReference type="SUPFAM" id="SSF49785">
    <property type="entry name" value="Galactose-binding domain-like"/>
    <property type="match status" value="1"/>
</dbReference>
<keyword id="KW-0119">Carbohydrate metabolism</keyword>
<keyword id="KW-0325">Glycoprotein</keyword>
<keyword id="KW-0326">Glycosidase</keyword>
<keyword id="KW-0378">Hydrolase</keyword>
<keyword id="KW-0624">Polysaccharide degradation</keyword>
<keyword id="KW-1185">Reference proteome</keyword>
<keyword id="KW-0964">Secreted</keyword>
<keyword id="KW-0732">Signal</keyword>
<reference key="1">
    <citation type="submission" date="2005-09" db="EMBL/GenBank/DDBJ databases">
        <title>Annotation of the Aspergillus terreus NIH2624 genome.</title>
        <authorList>
            <person name="Birren B.W."/>
            <person name="Lander E.S."/>
            <person name="Galagan J.E."/>
            <person name="Nusbaum C."/>
            <person name="Devon K."/>
            <person name="Henn M."/>
            <person name="Ma L.-J."/>
            <person name="Jaffe D.B."/>
            <person name="Butler J."/>
            <person name="Alvarez P."/>
            <person name="Gnerre S."/>
            <person name="Grabherr M."/>
            <person name="Kleber M."/>
            <person name="Mauceli E.W."/>
            <person name="Brockman W."/>
            <person name="Rounsley S."/>
            <person name="Young S.K."/>
            <person name="LaButti K."/>
            <person name="Pushparaj V."/>
            <person name="DeCaprio D."/>
            <person name="Crawford M."/>
            <person name="Koehrsen M."/>
            <person name="Engels R."/>
            <person name="Montgomery P."/>
            <person name="Pearson M."/>
            <person name="Howarth C."/>
            <person name="Larson L."/>
            <person name="Luoma S."/>
            <person name="White J."/>
            <person name="Alvarado L."/>
            <person name="Kodira C.D."/>
            <person name="Zeng Q."/>
            <person name="Oleary S."/>
            <person name="Yandava C."/>
            <person name="Denning D.W."/>
            <person name="Nierman W.C."/>
            <person name="Milne T."/>
            <person name="Madden K."/>
        </authorList>
    </citation>
    <scope>NUCLEOTIDE SEQUENCE [LARGE SCALE GENOMIC DNA]</scope>
    <source>
        <strain>NIH 2624 / FGSC A1156</strain>
    </source>
</reference>
<reference key="2">
    <citation type="journal article" date="2013" name="FEBS Lett.">
        <title>Phylogenetic analysis and substrate specificity of GH2 beta-mannosidases from Aspergillus species.</title>
        <authorList>
            <person name="Reddy S.K."/>
            <person name="Rosengren A."/>
            <person name="Klaubauf S."/>
            <person name="Kulkarni T."/>
            <person name="Karlsson E.N."/>
            <person name="de Vries R.P."/>
            <person name="Stalbrand H."/>
        </authorList>
    </citation>
    <scope>GENE MODEL REVISION</scope>
</reference>
<sequence length="932" mass="105189">MRVPAQATIAVLASAVSSPLNDPQIYDLGKLGWTLSSPALNRTVPGHLPSQVHLDLLRAGVIDDPYHDLNDFNLRWIADANWTYTSDPIRGLGNNTHSTWLVFEGLDTFATIKYCDKQIASTNNQFRQYAFDISEAVKDCTADPVLSLNFGSAPKIVDQIAADPASPQWPFGIQQSYEYPNRWFMRKEQSDFGWDWGPAFAPAGPWKPAYLVQLSSEQNVHVLNTDLDIYRQGQINYLPPDQTQPWVLNASIDFFGSLPSNSSMSIAISETNSGAELTTQSLRNITILNGSITGVAVLKDASPKLWWPYGLGEQNLYNVTITVSDGVRSLARVTKRTGFRTIFLNQRNITDTEIAQGVAPGAHWNFEVNGHEFYAKGSNLIPPDAFWARVTTTKMARLFDSVVAANQNMLRVWSSGAYLPDFMYDLADERGVLLWSEFEFSDAMYPVDKAFLDNVAAEVVYNVRRVNHHPSLALWAGGNEIESLILPTIERSYPDQYAKYVGDYETLYINLILPLVYENTHSITYSPSSTTEGYLDVNLSAKIVMAERYQNLTEGHYYGDTDYYNYDTSVAFDFSQYPVGRFANEFGFHSMPSLQSWQQAVDPEDLHFNSSVIMLRNHHYPAGNLSTHNFHNTSMGMGETTMGVMNYYPVPDKTDPIANFSAWCHATQLFQADFYKSQIQFYRRGSGMPERQLGSLYWQLEDIWQAPSWAGIEYDGRWKVLHYVARDIYQPVIVSPFWNSTTRRLDVYVTSDLWEPVSGTVDLAWMDLSGKPIAQNARTPKTAAFVVGALNTTKIYSMNINERALPDPKNSVLILSVQAEGHLPNSNKKSTLTHQGHFTPVFPKDLMLVDPHLELRYNAKTLTFTVQAKAGVSLYTWLDYPAGVVGYFEDNGFVLVPGQKRDIRFVMQEDKTDGNWVQDVTVRSLWDQTTKT</sequence>
<comment type="function">
    <text evidence="1">Exoglycosidase that cleaves the single beta-linked mannose residue from the non-reducing end of beta-mannosidic oligosaccharides of various complexity and length. Involved in the degradation of polymeric mannan and galactomannan (By similarity).</text>
</comment>
<comment type="catalytic activity">
    <reaction>
        <text>Hydrolysis of terminal, non-reducing beta-D-mannose residues in beta-D-mannosides.</text>
        <dbReference type="EC" id="3.2.1.25"/>
    </reaction>
</comment>
<comment type="pathway">
    <text>Glycan metabolism; N-glycan degradation.</text>
</comment>
<comment type="subunit">
    <text evidence="1">Homodimer.</text>
</comment>
<comment type="subcellular location">
    <subcellularLocation>
        <location evidence="1">Secreted</location>
    </subcellularLocation>
</comment>
<comment type="similarity">
    <text evidence="3">Belongs to the glycosyl hydrolase 2 family. Beta-mannosidase A subfamily.</text>
</comment>
<comment type="sequence caution" evidence="3">
    <conflict type="erroneous gene model prediction">
        <sequence resource="EMBL-CDS" id="EAU33180"/>
    </conflict>
</comment>
<protein>
    <recommendedName>
        <fullName>Beta-mannosidase A</fullName>
        <ecNumber>3.2.1.25</ecNumber>
    </recommendedName>
    <alternativeName>
        <fullName>Mannanase A</fullName>
        <shortName>Mannase A</shortName>
    </alternativeName>
</protein>